<sequence>MEKVVIVDAIRTPMGRSKGGAFRHVRAEDLSAHLMRSLLSRNPSVDPATLDDIYWGCVQQTLEQGFNIARNAALLAEIPHSVPATTVNRLCGSSMQALHDAARAIMVGDARTCLIGGVEHMGHVPMSHGVDFHPGLSRNVAKAAGMMGLTAEMLARMHGISREMQDRFAARSHQRAAAATQAGHFAAEIVAVCGHDADGVLKRYDADEVIRPETTVESLMALRPAFDPVDGTVTAGSSSALSDGAAAMLIMSGSQARQQGLKARARIRSMAVVGCDPSIMGYGPVPASQLALKRAGLSIADIGVFELNEAFAAQTLPCIKDLGLMDKLDEKVNLNGGAIALGHPLGCSGARISTTLLNLMERRDAQFGLATMCIGLGQGIATVFERI</sequence>
<reference key="1">
    <citation type="journal article" date="2008" name="Environ. Microbiol.">
        <title>The genome of Erwinia tasmaniensis strain Et1/99, a non-pathogenic bacterium in the genus Erwinia.</title>
        <authorList>
            <person name="Kube M."/>
            <person name="Migdoll A.M."/>
            <person name="Mueller I."/>
            <person name="Kuhl H."/>
            <person name="Beck A."/>
            <person name="Reinhardt R."/>
            <person name="Geider K."/>
        </authorList>
    </citation>
    <scope>NUCLEOTIDE SEQUENCE [LARGE SCALE GENOMIC DNA]</scope>
    <source>
        <strain>DSM 17950 / CFBP 7177 / CIP 109463 / NCPPB 4357 / Et1/99</strain>
    </source>
</reference>
<accession>B2VFE0</accession>
<protein>
    <recommendedName>
        <fullName evidence="1">3-ketoacyl-CoA thiolase</fullName>
        <ecNumber evidence="1">2.3.1.16</ecNumber>
    </recommendedName>
    <alternativeName>
        <fullName evidence="1">Acetyl-CoA acyltransferase</fullName>
    </alternativeName>
    <alternativeName>
        <fullName evidence="1">Beta-ketothiolase</fullName>
    </alternativeName>
    <alternativeName>
        <fullName evidence="1">Fatty acid oxidation complex subunit beta</fullName>
    </alternativeName>
</protein>
<gene>
    <name evidence="1" type="primary">fadA</name>
    <name type="ordered locus">ETA_02450</name>
</gene>
<name>FADA_ERWT9</name>
<dbReference type="EC" id="2.3.1.16" evidence="1"/>
<dbReference type="EMBL" id="CU468135">
    <property type="protein sequence ID" value="CAO95291.1"/>
    <property type="molecule type" value="Genomic_DNA"/>
</dbReference>
<dbReference type="RefSeq" id="WP_012440011.1">
    <property type="nucleotide sequence ID" value="NC_010694.1"/>
</dbReference>
<dbReference type="SMR" id="B2VFE0"/>
<dbReference type="STRING" id="465817.ETA_02450"/>
<dbReference type="KEGG" id="eta:ETA_02450"/>
<dbReference type="eggNOG" id="COG0183">
    <property type="taxonomic scope" value="Bacteria"/>
</dbReference>
<dbReference type="HOGENOM" id="CLU_031026_2_2_6"/>
<dbReference type="OrthoDB" id="8951704at2"/>
<dbReference type="UniPathway" id="UPA00659"/>
<dbReference type="Proteomes" id="UP000001726">
    <property type="component" value="Chromosome"/>
</dbReference>
<dbReference type="GO" id="GO:0005737">
    <property type="term" value="C:cytoplasm"/>
    <property type="evidence" value="ECO:0007669"/>
    <property type="project" value="UniProtKB-SubCell"/>
</dbReference>
<dbReference type="GO" id="GO:0003988">
    <property type="term" value="F:acetyl-CoA C-acyltransferase activity"/>
    <property type="evidence" value="ECO:0007669"/>
    <property type="project" value="UniProtKB-UniRule"/>
</dbReference>
<dbReference type="GO" id="GO:0006635">
    <property type="term" value="P:fatty acid beta-oxidation"/>
    <property type="evidence" value="ECO:0007669"/>
    <property type="project" value="UniProtKB-UniRule"/>
</dbReference>
<dbReference type="GO" id="GO:0010124">
    <property type="term" value="P:phenylacetate catabolic process"/>
    <property type="evidence" value="ECO:0007669"/>
    <property type="project" value="TreeGrafter"/>
</dbReference>
<dbReference type="CDD" id="cd00751">
    <property type="entry name" value="thiolase"/>
    <property type="match status" value="1"/>
</dbReference>
<dbReference type="FunFam" id="3.40.47.10:FF:000010">
    <property type="entry name" value="Acetyl-CoA acetyltransferase (Thiolase)"/>
    <property type="match status" value="1"/>
</dbReference>
<dbReference type="Gene3D" id="3.40.47.10">
    <property type="match status" value="2"/>
</dbReference>
<dbReference type="HAMAP" id="MF_01620">
    <property type="entry name" value="FadA"/>
    <property type="match status" value="1"/>
</dbReference>
<dbReference type="InterPro" id="IPR012805">
    <property type="entry name" value="FadA"/>
</dbReference>
<dbReference type="InterPro" id="IPR002155">
    <property type="entry name" value="Thiolase"/>
</dbReference>
<dbReference type="InterPro" id="IPR016039">
    <property type="entry name" value="Thiolase-like"/>
</dbReference>
<dbReference type="InterPro" id="IPR050215">
    <property type="entry name" value="Thiolase-like_sf_Thiolase"/>
</dbReference>
<dbReference type="InterPro" id="IPR020615">
    <property type="entry name" value="Thiolase_acyl_enz_int_AS"/>
</dbReference>
<dbReference type="InterPro" id="IPR020610">
    <property type="entry name" value="Thiolase_AS"/>
</dbReference>
<dbReference type="InterPro" id="IPR020617">
    <property type="entry name" value="Thiolase_C"/>
</dbReference>
<dbReference type="InterPro" id="IPR020613">
    <property type="entry name" value="Thiolase_CS"/>
</dbReference>
<dbReference type="InterPro" id="IPR020616">
    <property type="entry name" value="Thiolase_N"/>
</dbReference>
<dbReference type="NCBIfam" id="TIGR01930">
    <property type="entry name" value="AcCoA-C-Actrans"/>
    <property type="match status" value="1"/>
</dbReference>
<dbReference type="NCBIfam" id="TIGR02445">
    <property type="entry name" value="fadA"/>
    <property type="match status" value="1"/>
</dbReference>
<dbReference type="NCBIfam" id="NF006510">
    <property type="entry name" value="PRK08947.1"/>
    <property type="match status" value="1"/>
</dbReference>
<dbReference type="PANTHER" id="PTHR43853:SF11">
    <property type="entry name" value="3-KETOACYL-COA THIOLASE FADA"/>
    <property type="match status" value="1"/>
</dbReference>
<dbReference type="PANTHER" id="PTHR43853">
    <property type="entry name" value="3-KETOACYL-COA THIOLASE, PEROXISOMAL"/>
    <property type="match status" value="1"/>
</dbReference>
<dbReference type="Pfam" id="PF02803">
    <property type="entry name" value="Thiolase_C"/>
    <property type="match status" value="1"/>
</dbReference>
<dbReference type="Pfam" id="PF00108">
    <property type="entry name" value="Thiolase_N"/>
    <property type="match status" value="1"/>
</dbReference>
<dbReference type="PIRSF" id="PIRSF000429">
    <property type="entry name" value="Ac-CoA_Ac_transf"/>
    <property type="match status" value="1"/>
</dbReference>
<dbReference type="SUPFAM" id="SSF53901">
    <property type="entry name" value="Thiolase-like"/>
    <property type="match status" value="2"/>
</dbReference>
<dbReference type="PROSITE" id="PS00098">
    <property type="entry name" value="THIOLASE_1"/>
    <property type="match status" value="1"/>
</dbReference>
<dbReference type="PROSITE" id="PS00737">
    <property type="entry name" value="THIOLASE_2"/>
    <property type="match status" value="1"/>
</dbReference>
<dbReference type="PROSITE" id="PS00099">
    <property type="entry name" value="THIOLASE_3"/>
    <property type="match status" value="1"/>
</dbReference>
<keyword id="KW-0012">Acyltransferase</keyword>
<keyword id="KW-0963">Cytoplasm</keyword>
<keyword id="KW-0276">Fatty acid metabolism</keyword>
<keyword id="KW-0442">Lipid degradation</keyword>
<keyword id="KW-0443">Lipid metabolism</keyword>
<keyword id="KW-1185">Reference proteome</keyword>
<keyword id="KW-0808">Transferase</keyword>
<organism>
    <name type="scientific">Erwinia tasmaniensis (strain DSM 17950 / CFBP 7177 / CIP 109463 / NCPPB 4357 / Et1/99)</name>
    <dbReference type="NCBI Taxonomy" id="465817"/>
    <lineage>
        <taxon>Bacteria</taxon>
        <taxon>Pseudomonadati</taxon>
        <taxon>Pseudomonadota</taxon>
        <taxon>Gammaproteobacteria</taxon>
        <taxon>Enterobacterales</taxon>
        <taxon>Erwiniaceae</taxon>
        <taxon>Erwinia</taxon>
    </lineage>
</organism>
<proteinExistence type="inferred from homology"/>
<comment type="function">
    <text evidence="1">Catalyzes the final step of fatty acid oxidation in which acetyl-CoA is released and the CoA ester of a fatty acid two carbons shorter is formed.</text>
</comment>
<comment type="catalytic activity">
    <reaction evidence="1">
        <text>an acyl-CoA + acetyl-CoA = a 3-oxoacyl-CoA + CoA</text>
        <dbReference type="Rhea" id="RHEA:21564"/>
        <dbReference type="ChEBI" id="CHEBI:57287"/>
        <dbReference type="ChEBI" id="CHEBI:57288"/>
        <dbReference type="ChEBI" id="CHEBI:58342"/>
        <dbReference type="ChEBI" id="CHEBI:90726"/>
        <dbReference type="EC" id="2.3.1.16"/>
    </reaction>
</comment>
<comment type="pathway">
    <text evidence="1">Lipid metabolism; fatty acid beta-oxidation.</text>
</comment>
<comment type="subunit">
    <text evidence="1">Heterotetramer of two alpha chains (FadB) and two beta chains (FadA).</text>
</comment>
<comment type="subcellular location">
    <subcellularLocation>
        <location evidence="1">Cytoplasm</location>
    </subcellularLocation>
</comment>
<comment type="similarity">
    <text evidence="1">Belongs to the thiolase-like superfamily. Thiolase family.</text>
</comment>
<evidence type="ECO:0000255" key="1">
    <source>
        <dbReference type="HAMAP-Rule" id="MF_01620"/>
    </source>
</evidence>
<feature type="chain" id="PRO_1000186023" description="3-ketoacyl-CoA thiolase">
    <location>
        <begin position="1"/>
        <end position="387"/>
    </location>
</feature>
<feature type="active site" description="Acyl-thioester intermediate" evidence="1">
    <location>
        <position position="91"/>
    </location>
</feature>
<feature type="active site" description="Proton acceptor" evidence="1">
    <location>
        <position position="343"/>
    </location>
</feature>
<feature type="active site" description="Proton acceptor" evidence="1">
    <location>
        <position position="373"/>
    </location>
</feature>